<comment type="catalytic activity">
    <reaction evidence="1">
        <text>thymidine + phosphate = 2-deoxy-alpha-D-ribose 1-phosphate + thymine</text>
        <dbReference type="Rhea" id="RHEA:16037"/>
        <dbReference type="ChEBI" id="CHEBI:17748"/>
        <dbReference type="ChEBI" id="CHEBI:17821"/>
        <dbReference type="ChEBI" id="CHEBI:43474"/>
        <dbReference type="ChEBI" id="CHEBI:57259"/>
        <dbReference type="EC" id="2.4.2.4"/>
    </reaction>
</comment>
<comment type="similarity">
    <text evidence="1">Belongs to the thymidine/pyrimidine-nucleoside phosphorylase family. Type 2 subfamily.</text>
</comment>
<comment type="sequence caution" evidence="2">
    <conflict type="erroneous initiation">
        <sequence resource="EMBL-CDS" id="ABQ56181"/>
    </conflict>
</comment>
<feature type="chain" id="PRO_0000314700" description="Putative thymidine phosphorylase">
    <location>
        <begin position="1"/>
        <end position="517"/>
    </location>
</feature>
<protein>
    <recommendedName>
        <fullName evidence="1">Putative thymidine phosphorylase</fullName>
        <ecNumber evidence="1">2.4.2.4</ecNumber>
    </recommendedName>
    <alternativeName>
        <fullName evidence="1">TdRPase</fullName>
    </alternativeName>
</protein>
<proteinExistence type="inferred from homology"/>
<sequence length="517" mass="55259">MHHSFLSANGGVVMSKKTAHGLRLKHLGIKTYHEAIIYMREDCHVCHSEGFEVQTRIQVTLGQHSIIATLNVVTSELLAPGEAGLSDYAWDALHAKEGDEIQVSHPKPLESLSYVHTKIYGNELSYEQMKVIIDDVLSGRLSDVQISAFLAASSAGRLTRTEIMKLTKAMIDSGDRLSWSSPLVVDKHCVGGLPGNRTTLIVVPIVAAFGLMIPKTSSRAITSPAGTADTMETLAPVHLSPQKMRQVVEQENGCIVWGGAVSLSPADDVLIRVERAIDLDSEGQLVASILSKKIATGATHAVIDIPVGPTAKVRNQSMALLLKQSLEEVGNELGLVVHTILTDGSQPVGHGIGPSLEARDVMSVLQGLPDAPNDLRERALTLAGAALECSSKVQPGLGKSIAKQILESGKAFKKFQAICEAQGGMRELTKARFTHPVVAAKEGKVSLIDNRKLAKIAKLAGAPKSKSAGIDLHAHVGESVEQGEPLFTIHSESSGELNYACDLLRDKQDIIILGENS</sequence>
<keyword id="KW-0328">Glycosyltransferase</keyword>
<keyword id="KW-0808">Transferase</keyword>
<dbReference type="EC" id="2.4.2.4" evidence="1"/>
<dbReference type="EMBL" id="CP000675">
    <property type="protein sequence ID" value="ABQ56181.1"/>
    <property type="status" value="ALT_INIT"/>
    <property type="molecule type" value="Genomic_DNA"/>
</dbReference>
<dbReference type="SMR" id="A5IFN1"/>
<dbReference type="KEGG" id="lpc:LPC_2257"/>
<dbReference type="HOGENOM" id="CLU_025040_6_0_6"/>
<dbReference type="GO" id="GO:0005829">
    <property type="term" value="C:cytosol"/>
    <property type="evidence" value="ECO:0007669"/>
    <property type="project" value="TreeGrafter"/>
</dbReference>
<dbReference type="GO" id="GO:0004645">
    <property type="term" value="F:1,4-alpha-oligoglucan phosphorylase activity"/>
    <property type="evidence" value="ECO:0007669"/>
    <property type="project" value="InterPro"/>
</dbReference>
<dbReference type="GO" id="GO:0009032">
    <property type="term" value="F:thymidine phosphorylase activity"/>
    <property type="evidence" value="ECO:0007669"/>
    <property type="project" value="UniProtKB-UniRule"/>
</dbReference>
<dbReference type="GO" id="GO:0006206">
    <property type="term" value="P:pyrimidine nucleobase metabolic process"/>
    <property type="evidence" value="ECO:0007669"/>
    <property type="project" value="InterPro"/>
</dbReference>
<dbReference type="GO" id="GO:0006213">
    <property type="term" value="P:pyrimidine nucleoside metabolic process"/>
    <property type="evidence" value="ECO:0007669"/>
    <property type="project" value="InterPro"/>
</dbReference>
<dbReference type="Gene3D" id="1.20.970.50">
    <property type="match status" value="1"/>
</dbReference>
<dbReference type="Gene3D" id="2.40.40.20">
    <property type="match status" value="1"/>
</dbReference>
<dbReference type="Gene3D" id="3.40.1030.10">
    <property type="entry name" value="Nucleoside phosphorylase/phosphoribosyltransferase catalytic domain"/>
    <property type="match status" value="1"/>
</dbReference>
<dbReference type="Gene3D" id="3.90.1170.30">
    <property type="entry name" value="Pyrimidine nucleoside phosphorylase-like, C-terminal domain"/>
    <property type="match status" value="1"/>
</dbReference>
<dbReference type="HAMAP" id="MF_00703">
    <property type="entry name" value="Thymid_phosp_2"/>
    <property type="match status" value="1"/>
</dbReference>
<dbReference type="InterPro" id="IPR000312">
    <property type="entry name" value="Glycosyl_Trfase_fam3"/>
</dbReference>
<dbReference type="InterPro" id="IPR017459">
    <property type="entry name" value="Glycosyl_Trfase_fam3_N_dom"/>
</dbReference>
<dbReference type="InterPro" id="IPR036320">
    <property type="entry name" value="Glycosyl_Trfase_fam3_N_dom_sf"/>
</dbReference>
<dbReference type="InterPro" id="IPR035902">
    <property type="entry name" value="Nuc_phospho_transferase"/>
</dbReference>
<dbReference type="InterPro" id="IPR036566">
    <property type="entry name" value="PYNP-like_C_sf"/>
</dbReference>
<dbReference type="InterPro" id="IPR013102">
    <property type="entry name" value="PYNP_C"/>
</dbReference>
<dbReference type="InterPro" id="IPR017872">
    <property type="entry name" value="Pyrmidine_PPase_CS"/>
</dbReference>
<dbReference type="InterPro" id="IPR028579">
    <property type="entry name" value="Thym_Pase_Put"/>
</dbReference>
<dbReference type="InterPro" id="IPR013466">
    <property type="entry name" value="Thymidine/AMP_Pase"/>
</dbReference>
<dbReference type="InterPro" id="IPR000053">
    <property type="entry name" value="Thymidine/pyrmidine_PPase"/>
</dbReference>
<dbReference type="NCBIfam" id="TIGR02645">
    <property type="entry name" value="ARCH_P_rylase"/>
    <property type="match status" value="1"/>
</dbReference>
<dbReference type="NCBIfam" id="NF003338">
    <property type="entry name" value="PRK04350.1"/>
    <property type="match status" value="1"/>
</dbReference>
<dbReference type="PANTHER" id="PTHR10515">
    <property type="entry name" value="THYMIDINE PHOSPHORYLASE"/>
    <property type="match status" value="1"/>
</dbReference>
<dbReference type="PANTHER" id="PTHR10515:SF0">
    <property type="entry name" value="THYMIDINE PHOSPHORYLASE"/>
    <property type="match status" value="1"/>
</dbReference>
<dbReference type="Pfam" id="PF02885">
    <property type="entry name" value="Glycos_trans_3N"/>
    <property type="match status" value="1"/>
</dbReference>
<dbReference type="Pfam" id="PF00591">
    <property type="entry name" value="Glycos_transf_3"/>
    <property type="match status" value="1"/>
</dbReference>
<dbReference type="Pfam" id="PF07831">
    <property type="entry name" value="PYNP_C"/>
    <property type="match status" value="1"/>
</dbReference>
<dbReference type="SMART" id="SM00941">
    <property type="entry name" value="PYNP_C"/>
    <property type="match status" value="1"/>
</dbReference>
<dbReference type="SUPFAM" id="SSF52418">
    <property type="entry name" value="Nucleoside phosphorylase/phosphoribosyltransferase catalytic domain"/>
    <property type="match status" value="1"/>
</dbReference>
<dbReference type="SUPFAM" id="SSF47648">
    <property type="entry name" value="Nucleoside phosphorylase/phosphoribosyltransferase N-terminal domain"/>
    <property type="match status" value="1"/>
</dbReference>
<dbReference type="SUPFAM" id="SSF54680">
    <property type="entry name" value="Pyrimidine nucleoside phosphorylase C-terminal domain"/>
    <property type="match status" value="1"/>
</dbReference>
<dbReference type="PROSITE" id="PS00647">
    <property type="entry name" value="THYMID_PHOSPHORYLASE"/>
    <property type="match status" value="1"/>
</dbReference>
<gene>
    <name type="ordered locus">LPC_2257</name>
</gene>
<organism>
    <name type="scientific">Legionella pneumophila (strain Corby)</name>
    <dbReference type="NCBI Taxonomy" id="400673"/>
    <lineage>
        <taxon>Bacteria</taxon>
        <taxon>Pseudomonadati</taxon>
        <taxon>Pseudomonadota</taxon>
        <taxon>Gammaproteobacteria</taxon>
        <taxon>Legionellales</taxon>
        <taxon>Legionellaceae</taxon>
        <taxon>Legionella</taxon>
    </lineage>
</organism>
<evidence type="ECO:0000255" key="1">
    <source>
        <dbReference type="HAMAP-Rule" id="MF_00703"/>
    </source>
</evidence>
<evidence type="ECO:0000305" key="2"/>
<accession>A5IFN1</accession>
<name>TYPH_LEGPC</name>
<reference key="1">
    <citation type="submission" date="2006-11" db="EMBL/GenBank/DDBJ databases">
        <title>Identification and characterization of a new conjugation/ type IVA secretion system (trb/tra) of L. pneumophila Corby localized on a mobile genomic island.</title>
        <authorList>
            <person name="Gloeckner G."/>
            <person name="Albert-Weissenberger C."/>
            <person name="Weinmann E."/>
            <person name="Jacobi S."/>
            <person name="Schunder E."/>
            <person name="Steinert M."/>
            <person name="Buchrieser C."/>
            <person name="Hacker J."/>
            <person name="Heuner K."/>
        </authorList>
    </citation>
    <scope>NUCLEOTIDE SEQUENCE [LARGE SCALE GENOMIC DNA]</scope>
    <source>
        <strain>Corby</strain>
    </source>
</reference>